<evidence type="ECO:0000255" key="1">
    <source>
        <dbReference type="HAMAP-Rule" id="MF_01558"/>
    </source>
</evidence>
<evidence type="ECO:0000255" key="2">
    <source>
        <dbReference type="PROSITE-ProRule" id="PRU01083"/>
    </source>
</evidence>
<protein>
    <recommendedName>
        <fullName evidence="1">Cytidine deaminase</fullName>
        <ecNumber evidence="1">3.5.4.5</ecNumber>
    </recommendedName>
    <alternativeName>
        <fullName evidence="1">Cytidine aminohydrolase</fullName>
        <shortName evidence="1">CDA</shortName>
    </alternativeName>
</protein>
<keyword id="KW-0378">Hydrolase</keyword>
<keyword id="KW-0479">Metal-binding</keyword>
<keyword id="KW-0862">Zinc</keyword>
<proteinExistence type="inferred from homology"/>
<reference key="1">
    <citation type="journal article" date="2004" name="Nat. Biotechnol.">
        <title>The genome sequence of the capnophilic rumen bacterium Mannheimia succiniciproducens.</title>
        <authorList>
            <person name="Hong S.H."/>
            <person name="Kim J.S."/>
            <person name="Lee S.Y."/>
            <person name="In Y.H."/>
            <person name="Choi S.S."/>
            <person name="Rih J.-K."/>
            <person name="Kim C.H."/>
            <person name="Jeong H."/>
            <person name="Hur C.G."/>
            <person name="Kim J.J."/>
        </authorList>
    </citation>
    <scope>NUCLEOTIDE SEQUENCE [LARGE SCALE GENOMIC DNA]</scope>
    <source>
        <strain>KCTC 0769BP / MBEL55E</strain>
    </source>
</reference>
<dbReference type="EC" id="3.5.4.5" evidence="1"/>
<dbReference type="EMBL" id="AE016827">
    <property type="protein sequence ID" value="AAU38442.1"/>
    <property type="molecule type" value="Genomic_DNA"/>
</dbReference>
<dbReference type="RefSeq" id="WP_011200998.1">
    <property type="nucleotide sequence ID" value="NC_006300.1"/>
</dbReference>
<dbReference type="SMR" id="Q65RG8"/>
<dbReference type="STRING" id="221988.MS1835"/>
<dbReference type="KEGG" id="msu:MS1835"/>
<dbReference type="eggNOG" id="COG0295">
    <property type="taxonomic scope" value="Bacteria"/>
</dbReference>
<dbReference type="HOGENOM" id="CLU_052424_0_0_6"/>
<dbReference type="OrthoDB" id="9795347at2"/>
<dbReference type="Proteomes" id="UP000000607">
    <property type="component" value="Chromosome"/>
</dbReference>
<dbReference type="GO" id="GO:0005829">
    <property type="term" value="C:cytosol"/>
    <property type="evidence" value="ECO:0007669"/>
    <property type="project" value="TreeGrafter"/>
</dbReference>
<dbReference type="GO" id="GO:0004126">
    <property type="term" value="F:cytidine deaminase activity"/>
    <property type="evidence" value="ECO:0007669"/>
    <property type="project" value="UniProtKB-UniRule"/>
</dbReference>
<dbReference type="GO" id="GO:0042802">
    <property type="term" value="F:identical protein binding"/>
    <property type="evidence" value="ECO:0007669"/>
    <property type="project" value="UniProtKB-ARBA"/>
</dbReference>
<dbReference type="GO" id="GO:0008270">
    <property type="term" value="F:zinc ion binding"/>
    <property type="evidence" value="ECO:0007669"/>
    <property type="project" value="UniProtKB-UniRule"/>
</dbReference>
<dbReference type="GO" id="GO:0009972">
    <property type="term" value="P:cytidine deamination"/>
    <property type="evidence" value="ECO:0007669"/>
    <property type="project" value="InterPro"/>
</dbReference>
<dbReference type="CDD" id="cd01283">
    <property type="entry name" value="cytidine_deaminase"/>
    <property type="match status" value="1"/>
</dbReference>
<dbReference type="FunFam" id="3.40.140.10:FF:000007">
    <property type="entry name" value="Cytidine deaminase"/>
    <property type="match status" value="1"/>
</dbReference>
<dbReference type="Gene3D" id="3.40.140.10">
    <property type="entry name" value="Cytidine Deaminase, domain 2"/>
    <property type="match status" value="2"/>
</dbReference>
<dbReference type="HAMAP" id="MF_01558">
    <property type="entry name" value="Cyt_deam"/>
    <property type="match status" value="1"/>
</dbReference>
<dbReference type="InterPro" id="IPR016192">
    <property type="entry name" value="APOBEC/CMP_deaminase_Zn-bd"/>
</dbReference>
<dbReference type="InterPro" id="IPR002125">
    <property type="entry name" value="CMP_dCMP_dom"/>
</dbReference>
<dbReference type="InterPro" id="IPR013171">
    <property type="entry name" value="Cyd/dCyd_deaminase_Zn-bd"/>
</dbReference>
<dbReference type="InterPro" id="IPR050202">
    <property type="entry name" value="Cyt/Deoxycyt_deaminase"/>
</dbReference>
<dbReference type="InterPro" id="IPR016193">
    <property type="entry name" value="Cytidine_deaminase-like"/>
</dbReference>
<dbReference type="InterPro" id="IPR020797">
    <property type="entry name" value="Cytidine_deaminase_bacteria"/>
</dbReference>
<dbReference type="NCBIfam" id="NF006537">
    <property type="entry name" value="PRK09027.1"/>
    <property type="match status" value="1"/>
</dbReference>
<dbReference type="PANTHER" id="PTHR11644">
    <property type="entry name" value="CYTIDINE DEAMINASE"/>
    <property type="match status" value="1"/>
</dbReference>
<dbReference type="PANTHER" id="PTHR11644:SF2">
    <property type="entry name" value="CYTIDINE DEAMINASE"/>
    <property type="match status" value="1"/>
</dbReference>
<dbReference type="Pfam" id="PF00383">
    <property type="entry name" value="dCMP_cyt_deam_1"/>
    <property type="match status" value="1"/>
</dbReference>
<dbReference type="Pfam" id="PF08211">
    <property type="entry name" value="dCMP_cyt_deam_2"/>
    <property type="match status" value="1"/>
</dbReference>
<dbReference type="PIRSF" id="PIRSF006334">
    <property type="entry name" value="Cdd_plus_pseudo"/>
    <property type="match status" value="1"/>
</dbReference>
<dbReference type="SUPFAM" id="SSF53927">
    <property type="entry name" value="Cytidine deaminase-like"/>
    <property type="match status" value="2"/>
</dbReference>
<dbReference type="PROSITE" id="PS00903">
    <property type="entry name" value="CYT_DCMP_DEAMINASES_1"/>
    <property type="match status" value="1"/>
</dbReference>
<dbReference type="PROSITE" id="PS51747">
    <property type="entry name" value="CYT_DCMP_DEAMINASES_2"/>
    <property type="match status" value="2"/>
</dbReference>
<comment type="function">
    <text evidence="1">This enzyme scavenges exogenous and endogenous cytidine and 2'-deoxycytidine for UMP synthesis.</text>
</comment>
<comment type="catalytic activity">
    <reaction evidence="1">
        <text>cytidine + H2O + H(+) = uridine + NH4(+)</text>
        <dbReference type="Rhea" id="RHEA:16069"/>
        <dbReference type="ChEBI" id="CHEBI:15377"/>
        <dbReference type="ChEBI" id="CHEBI:15378"/>
        <dbReference type="ChEBI" id="CHEBI:16704"/>
        <dbReference type="ChEBI" id="CHEBI:17562"/>
        <dbReference type="ChEBI" id="CHEBI:28938"/>
        <dbReference type="EC" id="3.5.4.5"/>
    </reaction>
</comment>
<comment type="catalytic activity">
    <reaction evidence="1">
        <text>2'-deoxycytidine + H2O + H(+) = 2'-deoxyuridine + NH4(+)</text>
        <dbReference type="Rhea" id="RHEA:13433"/>
        <dbReference type="ChEBI" id="CHEBI:15377"/>
        <dbReference type="ChEBI" id="CHEBI:15378"/>
        <dbReference type="ChEBI" id="CHEBI:15698"/>
        <dbReference type="ChEBI" id="CHEBI:16450"/>
        <dbReference type="ChEBI" id="CHEBI:28938"/>
        <dbReference type="EC" id="3.5.4.5"/>
    </reaction>
</comment>
<comment type="cofactor">
    <cofactor evidence="1">
        <name>Zn(2+)</name>
        <dbReference type="ChEBI" id="CHEBI:29105"/>
    </cofactor>
    <text evidence="1">Binds 1 zinc ion.</text>
</comment>
<comment type="subunit">
    <text evidence="1">Homodimer.</text>
</comment>
<comment type="similarity">
    <text evidence="1">Belongs to the cytidine and deoxycytidylate deaminase family.</text>
</comment>
<name>CDD_MANSM</name>
<feature type="chain" id="PRO_0000171655" description="Cytidine deaminase">
    <location>
        <begin position="1"/>
        <end position="296"/>
    </location>
</feature>
<feature type="domain" description="CMP/dCMP-type deaminase 1" evidence="2">
    <location>
        <begin position="52"/>
        <end position="167"/>
    </location>
</feature>
<feature type="domain" description="CMP/dCMP-type deaminase 2" evidence="2">
    <location>
        <begin position="191"/>
        <end position="296"/>
    </location>
</feature>
<feature type="active site" description="Proton donor" evidence="1">
    <location>
        <position position="108"/>
    </location>
</feature>
<feature type="binding site" evidence="1">
    <location>
        <begin position="93"/>
        <end position="95"/>
    </location>
    <ligand>
        <name>substrate</name>
    </ligand>
</feature>
<feature type="binding site" evidence="1">
    <location>
        <position position="106"/>
    </location>
    <ligand>
        <name>Zn(2+)</name>
        <dbReference type="ChEBI" id="CHEBI:29105"/>
        <note>catalytic</note>
    </ligand>
</feature>
<feature type="binding site" evidence="1">
    <location>
        <position position="133"/>
    </location>
    <ligand>
        <name>Zn(2+)</name>
        <dbReference type="ChEBI" id="CHEBI:29105"/>
        <note>catalytic</note>
    </ligand>
</feature>
<feature type="binding site" evidence="1">
    <location>
        <position position="136"/>
    </location>
    <ligand>
        <name>Zn(2+)</name>
        <dbReference type="ChEBI" id="CHEBI:29105"/>
        <note>catalytic</note>
    </ligand>
</feature>
<organism>
    <name type="scientific">Mannheimia succiniciproducens (strain KCTC 0769BP / MBEL55E)</name>
    <dbReference type="NCBI Taxonomy" id="221988"/>
    <lineage>
        <taxon>Bacteria</taxon>
        <taxon>Pseudomonadati</taxon>
        <taxon>Pseudomonadota</taxon>
        <taxon>Gammaproteobacteria</taxon>
        <taxon>Pasteurellales</taxon>
        <taxon>Pasteurellaceae</taxon>
        <taxon>Basfia</taxon>
    </lineage>
</organism>
<sequence>MKNTIIKGLTDLVEQKRDNLIRQVVVQLEAQGYKAVLEQATVQQFCRQFALSPVEFALRCLPVAACYALTPISQFNVGAIAIGQSGSFYFGANQEFVAASMQQTVHAEQSAISHAWLAGEKAIAHMVVNYTPCGHCRQFMNELNSAERLKIHLPHSQNNLLHNYLPDAFGPKDLNIQNVFFDGQSHPFNYQGHDPLIRAAVEAASQSYAPYSQAFSGVALQLGELIICGRYAENAAFNPTFLPLQSALNYQRLQGLIDVKVSRVVMAEAKADLTSLPMTQSLAGAHLGLDIEYISL</sequence>
<gene>
    <name evidence="1" type="primary">cdd</name>
    <name type="ordered locus">MS1835</name>
</gene>
<accession>Q65RG8</accession>